<protein>
    <recommendedName>
        <fullName evidence="1">Large ribosomal subunit protein uL1</fullName>
    </recommendedName>
    <alternativeName>
        <fullName evidence="2">50S ribosomal protein L1</fullName>
    </alternativeName>
</protein>
<feature type="chain" id="PRO_0000230617" description="Large ribosomal subunit protein uL1">
    <location>
        <begin position="1"/>
        <end position="231"/>
    </location>
</feature>
<sequence length="231" mass="24122">MAKVSKRLKVLRSSVEANKLYAIDEAIALVKKAATAKFDESVDVSFNLGVDSRKSDQVIRGSVVLPKGTGKTTRVAVFTQGVNAEAAKEAGADVVGFEDLAAEIKAGNLNFDVVIASPDAMRIVGQLGTILGPRGLMPNPKIGTVTPNVAEAVKNAKAGQVQYRTDKAGIVHATIGRASFAEADLKENFDALLDAIVKAKPAAAKGQYLKKVAVSSTMGLGVRVDTSSVNN</sequence>
<dbReference type="EMBL" id="AE004969">
    <property type="protein sequence ID" value="AAW90475.1"/>
    <property type="molecule type" value="Genomic_DNA"/>
</dbReference>
<dbReference type="RefSeq" id="WP_003690110.1">
    <property type="nucleotide sequence ID" value="NC_002946.2"/>
</dbReference>
<dbReference type="RefSeq" id="YP_208887.1">
    <property type="nucleotide sequence ID" value="NC_002946.2"/>
</dbReference>
<dbReference type="SMR" id="Q5F5R2"/>
<dbReference type="STRING" id="242231.NGO_1854"/>
<dbReference type="GeneID" id="66754277"/>
<dbReference type="KEGG" id="ngo:NGO_1854"/>
<dbReference type="PATRIC" id="fig|242231.10.peg.2229"/>
<dbReference type="HOGENOM" id="CLU_062853_0_0_4"/>
<dbReference type="Proteomes" id="UP000000535">
    <property type="component" value="Chromosome"/>
</dbReference>
<dbReference type="GO" id="GO:0022625">
    <property type="term" value="C:cytosolic large ribosomal subunit"/>
    <property type="evidence" value="ECO:0007669"/>
    <property type="project" value="TreeGrafter"/>
</dbReference>
<dbReference type="GO" id="GO:0019843">
    <property type="term" value="F:rRNA binding"/>
    <property type="evidence" value="ECO:0007669"/>
    <property type="project" value="UniProtKB-UniRule"/>
</dbReference>
<dbReference type="GO" id="GO:0003735">
    <property type="term" value="F:structural constituent of ribosome"/>
    <property type="evidence" value="ECO:0007669"/>
    <property type="project" value="InterPro"/>
</dbReference>
<dbReference type="GO" id="GO:0000049">
    <property type="term" value="F:tRNA binding"/>
    <property type="evidence" value="ECO:0007669"/>
    <property type="project" value="UniProtKB-KW"/>
</dbReference>
<dbReference type="GO" id="GO:0006417">
    <property type="term" value="P:regulation of translation"/>
    <property type="evidence" value="ECO:0007669"/>
    <property type="project" value="UniProtKB-KW"/>
</dbReference>
<dbReference type="GO" id="GO:0006412">
    <property type="term" value="P:translation"/>
    <property type="evidence" value="ECO:0007669"/>
    <property type="project" value="UniProtKB-UniRule"/>
</dbReference>
<dbReference type="CDD" id="cd00403">
    <property type="entry name" value="Ribosomal_L1"/>
    <property type="match status" value="1"/>
</dbReference>
<dbReference type="FunFam" id="3.40.50.790:FF:000001">
    <property type="entry name" value="50S ribosomal protein L1"/>
    <property type="match status" value="1"/>
</dbReference>
<dbReference type="Gene3D" id="3.30.190.20">
    <property type="match status" value="1"/>
</dbReference>
<dbReference type="Gene3D" id="3.40.50.790">
    <property type="match status" value="1"/>
</dbReference>
<dbReference type="HAMAP" id="MF_01318_B">
    <property type="entry name" value="Ribosomal_uL1_B"/>
    <property type="match status" value="1"/>
</dbReference>
<dbReference type="InterPro" id="IPR005878">
    <property type="entry name" value="Ribosom_uL1_bac-type"/>
</dbReference>
<dbReference type="InterPro" id="IPR002143">
    <property type="entry name" value="Ribosomal_uL1"/>
</dbReference>
<dbReference type="InterPro" id="IPR023674">
    <property type="entry name" value="Ribosomal_uL1-like"/>
</dbReference>
<dbReference type="InterPro" id="IPR028364">
    <property type="entry name" value="Ribosomal_uL1/biogenesis"/>
</dbReference>
<dbReference type="InterPro" id="IPR016095">
    <property type="entry name" value="Ribosomal_uL1_3-a/b-sand"/>
</dbReference>
<dbReference type="InterPro" id="IPR023673">
    <property type="entry name" value="Ribosomal_uL1_CS"/>
</dbReference>
<dbReference type="NCBIfam" id="TIGR01169">
    <property type="entry name" value="rplA_bact"/>
    <property type="match status" value="1"/>
</dbReference>
<dbReference type="PANTHER" id="PTHR36427">
    <property type="entry name" value="54S RIBOSOMAL PROTEIN L1, MITOCHONDRIAL"/>
    <property type="match status" value="1"/>
</dbReference>
<dbReference type="PANTHER" id="PTHR36427:SF3">
    <property type="entry name" value="LARGE RIBOSOMAL SUBUNIT PROTEIN UL1M"/>
    <property type="match status" value="1"/>
</dbReference>
<dbReference type="Pfam" id="PF00687">
    <property type="entry name" value="Ribosomal_L1"/>
    <property type="match status" value="1"/>
</dbReference>
<dbReference type="PIRSF" id="PIRSF002155">
    <property type="entry name" value="Ribosomal_L1"/>
    <property type="match status" value="1"/>
</dbReference>
<dbReference type="SUPFAM" id="SSF56808">
    <property type="entry name" value="Ribosomal protein L1"/>
    <property type="match status" value="1"/>
</dbReference>
<dbReference type="PROSITE" id="PS01199">
    <property type="entry name" value="RIBOSOMAL_L1"/>
    <property type="match status" value="1"/>
</dbReference>
<name>RL1_NEIG1</name>
<comment type="function">
    <text evidence="1">Binds directly to 23S rRNA. The L1 stalk is quite mobile in the ribosome, and is involved in E site tRNA release.</text>
</comment>
<comment type="function">
    <text evidence="1">Protein L1 is also a translational repressor protein, it controls the translation of the L11 operon by binding to its mRNA.</text>
</comment>
<comment type="subunit">
    <text evidence="1">Part of the 50S ribosomal subunit.</text>
</comment>
<comment type="similarity">
    <text evidence="1">Belongs to the universal ribosomal protein uL1 family.</text>
</comment>
<proteinExistence type="inferred from homology"/>
<accession>Q5F5R2</accession>
<gene>
    <name evidence="1" type="primary">rplA</name>
    <name type="ordered locus">NGO_1854</name>
</gene>
<evidence type="ECO:0000255" key="1">
    <source>
        <dbReference type="HAMAP-Rule" id="MF_01318"/>
    </source>
</evidence>
<evidence type="ECO:0000305" key="2"/>
<reference key="1">
    <citation type="submission" date="2003-03" db="EMBL/GenBank/DDBJ databases">
        <title>The complete genome sequence of Neisseria gonorrhoeae.</title>
        <authorList>
            <person name="Lewis L.A."/>
            <person name="Gillaspy A.F."/>
            <person name="McLaughlin R.E."/>
            <person name="Gipson M."/>
            <person name="Ducey T.F."/>
            <person name="Ownbey T."/>
            <person name="Hartman K."/>
            <person name="Nydick C."/>
            <person name="Carson M.B."/>
            <person name="Vaughn J."/>
            <person name="Thomson C."/>
            <person name="Song L."/>
            <person name="Lin S."/>
            <person name="Yuan X."/>
            <person name="Najar F."/>
            <person name="Zhan M."/>
            <person name="Ren Q."/>
            <person name="Zhu H."/>
            <person name="Qi S."/>
            <person name="Kenton S.M."/>
            <person name="Lai H."/>
            <person name="White J.D."/>
            <person name="Clifton S."/>
            <person name="Roe B.A."/>
            <person name="Dyer D.W."/>
        </authorList>
    </citation>
    <scope>NUCLEOTIDE SEQUENCE [LARGE SCALE GENOMIC DNA]</scope>
    <source>
        <strain>ATCC 700825 / FA 1090</strain>
    </source>
</reference>
<keyword id="KW-1185">Reference proteome</keyword>
<keyword id="KW-0678">Repressor</keyword>
<keyword id="KW-0687">Ribonucleoprotein</keyword>
<keyword id="KW-0689">Ribosomal protein</keyword>
<keyword id="KW-0694">RNA-binding</keyword>
<keyword id="KW-0699">rRNA-binding</keyword>
<keyword id="KW-0810">Translation regulation</keyword>
<keyword id="KW-0820">tRNA-binding</keyword>
<organism>
    <name type="scientific">Neisseria gonorrhoeae (strain ATCC 700825 / FA 1090)</name>
    <dbReference type="NCBI Taxonomy" id="242231"/>
    <lineage>
        <taxon>Bacteria</taxon>
        <taxon>Pseudomonadati</taxon>
        <taxon>Pseudomonadota</taxon>
        <taxon>Betaproteobacteria</taxon>
        <taxon>Neisseriales</taxon>
        <taxon>Neisseriaceae</taxon>
        <taxon>Neisseria</taxon>
    </lineage>
</organism>